<comment type="function">
    <text evidence="1">Catalyzes the formation of 6,7-dimethyl-8-ribityllumazine by condensation of 5-amino-6-(D-ribitylamino)uracil with 3,4-dihydroxy-2-butanone 4-phosphate. This is the penultimate step in the biosynthesis of riboflavin.</text>
</comment>
<comment type="catalytic activity">
    <reaction evidence="1">
        <text>(2S)-2-hydroxy-3-oxobutyl phosphate + 5-amino-6-(D-ribitylamino)uracil = 6,7-dimethyl-8-(1-D-ribityl)lumazine + phosphate + 2 H2O + H(+)</text>
        <dbReference type="Rhea" id="RHEA:26152"/>
        <dbReference type="ChEBI" id="CHEBI:15377"/>
        <dbReference type="ChEBI" id="CHEBI:15378"/>
        <dbReference type="ChEBI" id="CHEBI:15934"/>
        <dbReference type="ChEBI" id="CHEBI:43474"/>
        <dbReference type="ChEBI" id="CHEBI:58201"/>
        <dbReference type="ChEBI" id="CHEBI:58830"/>
        <dbReference type="EC" id="2.5.1.78"/>
    </reaction>
</comment>
<comment type="pathway">
    <text evidence="1">Cofactor biosynthesis; riboflavin biosynthesis; riboflavin from 2-hydroxy-3-oxobutyl phosphate and 5-amino-6-(D-ribitylamino)uracil: step 1/2.</text>
</comment>
<comment type="similarity">
    <text evidence="1">Belongs to the DMRL synthase family.</text>
</comment>
<proteinExistence type="inferred from homology"/>
<keyword id="KW-0686">Riboflavin biosynthesis</keyword>
<keyword id="KW-0808">Transferase</keyword>
<feature type="chain" id="PRO_1000195474" description="6,7-dimethyl-8-ribityllumazine synthase">
    <location>
        <begin position="1"/>
        <end position="155"/>
    </location>
</feature>
<feature type="active site" description="Proton donor" evidence="1">
    <location>
        <position position="89"/>
    </location>
</feature>
<feature type="binding site" evidence="1">
    <location>
        <position position="23"/>
    </location>
    <ligand>
        <name>5-amino-6-(D-ribitylamino)uracil</name>
        <dbReference type="ChEBI" id="CHEBI:15934"/>
    </ligand>
</feature>
<feature type="binding site" evidence="1">
    <location>
        <begin position="57"/>
        <end position="59"/>
    </location>
    <ligand>
        <name>5-amino-6-(D-ribitylamino)uracil</name>
        <dbReference type="ChEBI" id="CHEBI:15934"/>
    </ligand>
</feature>
<feature type="binding site" evidence="1">
    <location>
        <begin position="81"/>
        <end position="83"/>
    </location>
    <ligand>
        <name>5-amino-6-(D-ribitylamino)uracil</name>
        <dbReference type="ChEBI" id="CHEBI:15934"/>
    </ligand>
</feature>
<feature type="binding site" evidence="1">
    <location>
        <begin position="86"/>
        <end position="87"/>
    </location>
    <ligand>
        <name>(2S)-2-hydroxy-3-oxobutyl phosphate</name>
        <dbReference type="ChEBI" id="CHEBI:58830"/>
    </ligand>
</feature>
<feature type="binding site" evidence="1">
    <location>
        <position position="114"/>
    </location>
    <ligand>
        <name>5-amino-6-(D-ribitylamino)uracil</name>
        <dbReference type="ChEBI" id="CHEBI:15934"/>
    </ligand>
</feature>
<feature type="binding site" evidence="1">
    <location>
        <position position="128"/>
    </location>
    <ligand>
        <name>(2S)-2-hydroxy-3-oxobutyl phosphate</name>
        <dbReference type="ChEBI" id="CHEBI:58830"/>
    </ligand>
</feature>
<sequence>MGKEFSGVLNGQGLKVALVVSRFNEFITSKLLSGAKDSLERHGVSADNTDVAWVPGAFEIPLVAQKLAKSGRYDAVICLGAVIRGSTPHFEYVSSEVSKGIARVGLDASLPVIFGVITADSIEQAIERAGTKMGNKGFDAATQAIEVANLMKNLG</sequence>
<reference key="1">
    <citation type="journal article" date="2005" name="Science">
        <title>Genome sequence of the PCE-dechlorinating bacterium Dehalococcoides ethenogenes.</title>
        <authorList>
            <person name="Seshadri R."/>
            <person name="Adrian L."/>
            <person name="Fouts D.E."/>
            <person name="Eisen J.A."/>
            <person name="Phillippy A.M."/>
            <person name="Methe B.A."/>
            <person name="Ward N.L."/>
            <person name="Nelson W.C."/>
            <person name="DeBoy R.T."/>
            <person name="Khouri H.M."/>
            <person name="Kolonay J.F."/>
            <person name="Dodson R.J."/>
            <person name="Daugherty S.C."/>
            <person name="Brinkac L.M."/>
            <person name="Sullivan S.A."/>
            <person name="Madupu R."/>
            <person name="Nelson K.E."/>
            <person name="Kang K.H."/>
            <person name="Impraim M."/>
            <person name="Tran K."/>
            <person name="Robinson J.M."/>
            <person name="Forberger H.A."/>
            <person name="Fraser C.M."/>
            <person name="Zinder S.H."/>
            <person name="Heidelberg J.F."/>
        </authorList>
    </citation>
    <scope>NUCLEOTIDE SEQUENCE [LARGE SCALE GENOMIC DNA]</scope>
    <source>
        <strain>ATCC BAA-2266 / KCTC 15142 / 195</strain>
    </source>
</reference>
<dbReference type="EC" id="2.5.1.78" evidence="1"/>
<dbReference type="EMBL" id="CP000027">
    <property type="protein sequence ID" value="AAW39575.1"/>
    <property type="molecule type" value="Genomic_DNA"/>
</dbReference>
<dbReference type="SMR" id="Q3Z799"/>
<dbReference type="FunCoup" id="Q3Z799">
    <property type="interactions" value="341"/>
</dbReference>
<dbReference type="STRING" id="243164.DET1187"/>
<dbReference type="GeneID" id="3229536"/>
<dbReference type="KEGG" id="det:DET1187"/>
<dbReference type="eggNOG" id="COG0054">
    <property type="taxonomic scope" value="Bacteria"/>
</dbReference>
<dbReference type="HOGENOM" id="CLU_089358_1_1_0"/>
<dbReference type="InParanoid" id="Q3Z799"/>
<dbReference type="UniPathway" id="UPA00275">
    <property type="reaction ID" value="UER00404"/>
</dbReference>
<dbReference type="Proteomes" id="UP000008289">
    <property type="component" value="Chromosome"/>
</dbReference>
<dbReference type="GO" id="GO:0005829">
    <property type="term" value="C:cytosol"/>
    <property type="evidence" value="ECO:0007669"/>
    <property type="project" value="TreeGrafter"/>
</dbReference>
<dbReference type="GO" id="GO:0009349">
    <property type="term" value="C:riboflavin synthase complex"/>
    <property type="evidence" value="ECO:0007669"/>
    <property type="project" value="InterPro"/>
</dbReference>
<dbReference type="GO" id="GO:0000906">
    <property type="term" value="F:6,7-dimethyl-8-ribityllumazine synthase activity"/>
    <property type="evidence" value="ECO:0007669"/>
    <property type="project" value="UniProtKB-UniRule"/>
</dbReference>
<dbReference type="GO" id="GO:0009231">
    <property type="term" value="P:riboflavin biosynthetic process"/>
    <property type="evidence" value="ECO:0007669"/>
    <property type="project" value="UniProtKB-UniRule"/>
</dbReference>
<dbReference type="CDD" id="cd09209">
    <property type="entry name" value="Lumazine_synthase-I"/>
    <property type="match status" value="1"/>
</dbReference>
<dbReference type="FunFam" id="3.40.50.960:FF:000001">
    <property type="entry name" value="6,7-dimethyl-8-ribityllumazine synthase"/>
    <property type="match status" value="1"/>
</dbReference>
<dbReference type="Gene3D" id="3.40.50.960">
    <property type="entry name" value="Lumazine/riboflavin synthase"/>
    <property type="match status" value="1"/>
</dbReference>
<dbReference type="HAMAP" id="MF_00178">
    <property type="entry name" value="Lumazine_synth"/>
    <property type="match status" value="1"/>
</dbReference>
<dbReference type="InterPro" id="IPR034964">
    <property type="entry name" value="LS"/>
</dbReference>
<dbReference type="InterPro" id="IPR002180">
    <property type="entry name" value="LS/RS"/>
</dbReference>
<dbReference type="InterPro" id="IPR036467">
    <property type="entry name" value="LS/RS_sf"/>
</dbReference>
<dbReference type="NCBIfam" id="TIGR00114">
    <property type="entry name" value="lumazine-synth"/>
    <property type="match status" value="1"/>
</dbReference>
<dbReference type="NCBIfam" id="NF000812">
    <property type="entry name" value="PRK00061.1-4"/>
    <property type="match status" value="1"/>
</dbReference>
<dbReference type="PANTHER" id="PTHR21058:SF0">
    <property type="entry name" value="6,7-DIMETHYL-8-RIBITYLLUMAZINE SYNTHASE"/>
    <property type="match status" value="1"/>
</dbReference>
<dbReference type="PANTHER" id="PTHR21058">
    <property type="entry name" value="6,7-DIMETHYL-8-RIBITYLLUMAZINE SYNTHASE DMRL SYNTHASE LUMAZINE SYNTHASE"/>
    <property type="match status" value="1"/>
</dbReference>
<dbReference type="Pfam" id="PF00885">
    <property type="entry name" value="DMRL_synthase"/>
    <property type="match status" value="1"/>
</dbReference>
<dbReference type="SUPFAM" id="SSF52121">
    <property type="entry name" value="Lumazine synthase"/>
    <property type="match status" value="1"/>
</dbReference>
<accession>Q3Z799</accession>
<gene>
    <name evidence="1" type="primary">ribH</name>
    <name type="ordered locus">DET1187</name>
</gene>
<organism>
    <name type="scientific">Dehalococcoides mccartyi (strain ATCC BAA-2266 / KCTC 15142 / 195)</name>
    <name type="common">Dehalococcoides ethenogenes (strain 195)</name>
    <dbReference type="NCBI Taxonomy" id="243164"/>
    <lineage>
        <taxon>Bacteria</taxon>
        <taxon>Bacillati</taxon>
        <taxon>Chloroflexota</taxon>
        <taxon>Dehalococcoidia</taxon>
        <taxon>Dehalococcoidales</taxon>
        <taxon>Dehalococcoidaceae</taxon>
        <taxon>Dehalococcoides</taxon>
    </lineage>
</organism>
<evidence type="ECO:0000255" key="1">
    <source>
        <dbReference type="HAMAP-Rule" id="MF_00178"/>
    </source>
</evidence>
<name>RISB_DEHM1</name>
<protein>
    <recommendedName>
        <fullName evidence="1">6,7-dimethyl-8-ribityllumazine synthase</fullName>
        <shortName evidence="1">DMRL synthase</shortName>
        <shortName evidence="1">LS</shortName>
        <shortName evidence="1">Lumazine synthase</shortName>
        <ecNumber evidence="1">2.5.1.78</ecNumber>
    </recommendedName>
</protein>